<proteinExistence type="inferred from homology"/>
<dbReference type="EC" id="2.5.1.141" evidence="1"/>
<dbReference type="EMBL" id="AP008229">
    <property type="protein sequence ID" value="BAE70666.1"/>
    <property type="molecule type" value="Genomic_DNA"/>
</dbReference>
<dbReference type="RefSeq" id="WP_011409570.1">
    <property type="nucleotide sequence ID" value="NC_007705.1"/>
</dbReference>
<dbReference type="SMR" id="Q2NYG1"/>
<dbReference type="GeneID" id="77339146"/>
<dbReference type="KEGG" id="xom:XOO3911"/>
<dbReference type="HOGENOM" id="CLU_029631_0_2_6"/>
<dbReference type="UniPathway" id="UPA00834">
    <property type="reaction ID" value="UER00712"/>
</dbReference>
<dbReference type="GO" id="GO:0005886">
    <property type="term" value="C:plasma membrane"/>
    <property type="evidence" value="ECO:0007669"/>
    <property type="project" value="UniProtKB-SubCell"/>
</dbReference>
<dbReference type="GO" id="GO:0008495">
    <property type="term" value="F:protoheme IX farnesyltransferase activity"/>
    <property type="evidence" value="ECO:0007669"/>
    <property type="project" value="UniProtKB-UniRule"/>
</dbReference>
<dbReference type="GO" id="GO:0048034">
    <property type="term" value="P:heme O biosynthetic process"/>
    <property type="evidence" value="ECO:0007669"/>
    <property type="project" value="UniProtKB-UniRule"/>
</dbReference>
<dbReference type="CDD" id="cd13957">
    <property type="entry name" value="PT_UbiA_Cox10"/>
    <property type="match status" value="1"/>
</dbReference>
<dbReference type="FunFam" id="1.10.357.140:FF:000001">
    <property type="entry name" value="Protoheme IX farnesyltransferase"/>
    <property type="match status" value="1"/>
</dbReference>
<dbReference type="Gene3D" id="1.10.357.140">
    <property type="entry name" value="UbiA prenyltransferase"/>
    <property type="match status" value="1"/>
</dbReference>
<dbReference type="HAMAP" id="MF_00154">
    <property type="entry name" value="CyoE_CtaB"/>
    <property type="match status" value="1"/>
</dbReference>
<dbReference type="InterPro" id="IPR006369">
    <property type="entry name" value="Protohaem_IX_farnesylTrfase"/>
</dbReference>
<dbReference type="InterPro" id="IPR000537">
    <property type="entry name" value="UbiA_prenyltransferase"/>
</dbReference>
<dbReference type="InterPro" id="IPR030470">
    <property type="entry name" value="UbiA_prenylTrfase_CS"/>
</dbReference>
<dbReference type="InterPro" id="IPR044878">
    <property type="entry name" value="UbiA_sf"/>
</dbReference>
<dbReference type="NCBIfam" id="TIGR01473">
    <property type="entry name" value="cyoE_ctaB"/>
    <property type="match status" value="1"/>
</dbReference>
<dbReference type="NCBIfam" id="NF003349">
    <property type="entry name" value="PRK04375.1-2"/>
    <property type="match status" value="1"/>
</dbReference>
<dbReference type="PANTHER" id="PTHR43448:SF7">
    <property type="entry name" value="4-HYDROXYBENZOATE SOLANESYLTRANSFERASE"/>
    <property type="match status" value="1"/>
</dbReference>
<dbReference type="PANTHER" id="PTHR43448">
    <property type="entry name" value="PROTOHEME IX FARNESYLTRANSFERASE, MITOCHONDRIAL"/>
    <property type="match status" value="1"/>
</dbReference>
<dbReference type="Pfam" id="PF01040">
    <property type="entry name" value="UbiA"/>
    <property type="match status" value="1"/>
</dbReference>
<dbReference type="PROSITE" id="PS00943">
    <property type="entry name" value="UBIA"/>
    <property type="match status" value="1"/>
</dbReference>
<sequence>MAVRARDYWDLTKPKVVALIVFTALVGMFLAIPDMPTWLQVRTGALGFLGIWLAASAAAAINQLLDAKIDAQMARTSWRPLVVGKVQPWQVLVFAGALIVISMTILVVWVNVITAVLTFASLIGYAVIYTVYLKRATSQNIVIGGLAGATPPMLGWAAVTGLPTSADWINASLLVLIIFIWTPPHFWALAIFRRADYAKAAIPMLPVTHGVPHTRKQILVYTVLLAIVTLLPVTVGMSGVFYLGGAVVLNAVFLWYAWRMLNPPDELFSMKMFGYSIVYLMALFAFLMVDHLLLPWVR</sequence>
<organism>
    <name type="scientific">Xanthomonas oryzae pv. oryzae (strain MAFF 311018)</name>
    <dbReference type="NCBI Taxonomy" id="342109"/>
    <lineage>
        <taxon>Bacteria</taxon>
        <taxon>Pseudomonadati</taxon>
        <taxon>Pseudomonadota</taxon>
        <taxon>Gammaproteobacteria</taxon>
        <taxon>Lysobacterales</taxon>
        <taxon>Lysobacteraceae</taxon>
        <taxon>Xanthomonas</taxon>
    </lineage>
</organism>
<evidence type="ECO:0000255" key="1">
    <source>
        <dbReference type="HAMAP-Rule" id="MF_00154"/>
    </source>
</evidence>
<feature type="chain" id="PRO_0000326974" description="Protoheme IX farnesyltransferase">
    <location>
        <begin position="1"/>
        <end position="298"/>
    </location>
</feature>
<feature type="transmembrane region" description="Helical" evidence="1">
    <location>
        <begin position="16"/>
        <end position="36"/>
    </location>
</feature>
<feature type="transmembrane region" description="Helical" evidence="1">
    <location>
        <begin position="45"/>
        <end position="65"/>
    </location>
</feature>
<feature type="transmembrane region" description="Helical" evidence="1">
    <location>
        <begin position="93"/>
        <end position="113"/>
    </location>
</feature>
<feature type="transmembrane region" description="Helical" evidence="1">
    <location>
        <begin position="114"/>
        <end position="134"/>
    </location>
</feature>
<feature type="transmembrane region" description="Helical" evidence="1">
    <location>
        <begin position="141"/>
        <end position="161"/>
    </location>
</feature>
<feature type="transmembrane region" description="Helical" evidence="1">
    <location>
        <begin position="172"/>
        <end position="192"/>
    </location>
</feature>
<feature type="transmembrane region" description="Helical" evidence="1">
    <location>
        <begin position="223"/>
        <end position="243"/>
    </location>
</feature>
<feature type="transmembrane region" description="Helical" evidence="1">
    <location>
        <begin position="244"/>
        <end position="264"/>
    </location>
</feature>
<feature type="transmembrane region" description="Helical" evidence="1">
    <location>
        <begin position="277"/>
        <end position="297"/>
    </location>
</feature>
<name>CYOE_XANOM</name>
<reference key="1">
    <citation type="journal article" date="2005" name="Jpn. Agric. Res. Q.">
        <title>Genome sequence of Xanthomonas oryzae pv. oryzae suggests contribution of large numbers of effector genes and insertion sequences to its race diversity.</title>
        <authorList>
            <person name="Ochiai H."/>
            <person name="Inoue Y."/>
            <person name="Takeya M."/>
            <person name="Sasaki A."/>
            <person name="Kaku H."/>
        </authorList>
    </citation>
    <scope>NUCLEOTIDE SEQUENCE [LARGE SCALE GENOMIC DNA]</scope>
    <source>
        <strain>MAFF 311018</strain>
    </source>
</reference>
<comment type="function">
    <text evidence="1">Converts heme B (protoheme IX) to heme O by substitution of the vinyl group on carbon 2 of heme B porphyrin ring with a hydroxyethyl farnesyl side group.</text>
</comment>
<comment type="catalytic activity">
    <reaction evidence="1">
        <text>heme b + (2E,6E)-farnesyl diphosphate + H2O = Fe(II)-heme o + diphosphate</text>
        <dbReference type="Rhea" id="RHEA:28070"/>
        <dbReference type="ChEBI" id="CHEBI:15377"/>
        <dbReference type="ChEBI" id="CHEBI:33019"/>
        <dbReference type="ChEBI" id="CHEBI:60344"/>
        <dbReference type="ChEBI" id="CHEBI:60530"/>
        <dbReference type="ChEBI" id="CHEBI:175763"/>
        <dbReference type="EC" id="2.5.1.141"/>
    </reaction>
</comment>
<comment type="pathway">
    <text evidence="1">Porphyrin-containing compound metabolism; heme O biosynthesis; heme O from protoheme: step 1/1.</text>
</comment>
<comment type="subcellular location">
    <subcellularLocation>
        <location evidence="1">Cell inner membrane</location>
        <topology evidence="1">Multi-pass membrane protein</topology>
    </subcellularLocation>
</comment>
<comment type="miscellaneous">
    <text evidence="1">Carbon 2 of the heme B porphyrin ring is defined according to the Fischer nomenclature.</text>
</comment>
<comment type="similarity">
    <text evidence="1">Belongs to the UbiA prenyltransferase family. Protoheme IX farnesyltransferase subfamily.</text>
</comment>
<protein>
    <recommendedName>
        <fullName evidence="1">Protoheme IX farnesyltransferase</fullName>
        <ecNumber evidence="1">2.5.1.141</ecNumber>
    </recommendedName>
    <alternativeName>
        <fullName evidence="1">Heme B farnesyltransferase</fullName>
    </alternativeName>
    <alternativeName>
        <fullName evidence="1">Heme O synthase</fullName>
    </alternativeName>
</protein>
<accession>Q2NYG1</accession>
<keyword id="KW-0997">Cell inner membrane</keyword>
<keyword id="KW-1003">Cell membrane</keyword>
<keyword id="KW-0350">Heme biosynthesis</keyword>
<keyword id="KW-0472">Membrane</keyword>
<keyword id="KW-0808">Transferase</keyword>
<keyword id="KW-0812">Transmembrane</keyword>
<keyword id="KW-1133">Transmembrane helix</keyword>
<gene>
    <name evidence="1" type="primary">cyoE</name>
    <name type="ordered locus">XOO3911</name>
</gene>